<protein>
    <recommendedName>
        <fullName evidence="1">Glyoxylate/hydroxypyruvate reductase B</fullName>
        <ecNumber evidence="1">1.1.1.79</ecNumber>
        <ecNumber evidence="1">1.1.1.81</ecNumber>
    </recommendedName>
</protein>
<reference key="1">
    <citation type="journal article" date="2001" name="Nature">
        <title>Complete genome sequence of a multiple drug resistant Salmonella enterica serovar Typhi CT18.</title>
        <authorList>
            <person name="Parkhill J."/>
            <person name="Dougan G."/>
            <person name="James K.D."/>
            <person name="Thomson N.R."/>
            <person name="Pickard D."/>
            <person name="Wain J."/>
            <person name="Churcher C.M."/>
            <person name="Mungall K.L."/>
            <person name="Bentley S.D."/>
            <person name="Holden M.T.G."/>
            <person name="Sebaihia M."/>
            <person name="Baker S."/>
            <person name="Basham D."/>
            <person name="Brooks K."/>
            <person name="Chillingworth T."/>
            <person name="Connerton P."/>
            <person name="Cronin A."/>
            <person name="Davis P."/>
            <person name="Davies R.M."/>
            <person name="Dowd L."/>
            <person name="White N."/>
            <person name="Farrar J."/>
            <person name="Feltwell T."/>
            <person name="Hamlin N."/>
            <person name="Haque A."/>
            <person name="Hien T.T."/>
            <person name="Holroyd S."/>
            <person name="Jagels K."/>
            <person name="Krogh A."/>
            <person name="Larsen T.S."/>
            <person name="Leather S."/>
            <person name="Moule S."/>
            <person name="O'Gaora P."/>
            <person name="Parry C."/>
            <person name="Quail M.A."/>
            <person name="Rutherford K.M."/>
            <person name="Simmonds M."/>
            <person name="Skelton J."/>
            <person name="Stevens K."/>
            <person name="Whitehead S."/>
            <person name="Barrell B.G."/>
        </authorList>
    </citation>
    <scope>NUCLEOTIDE SEQUENCE [LARGE SCALE GENOMIC DNA]</scope>
    <source>
        <strain>CT18</strain>
    </source>
</reference>
<reference key="2">
    <citation type="journal article" date="2003" name="J. Bacteriol.">
        <title>Comparative genomics of Salmonella enterica serovar Typhi strains Ty2 and CT18.</title>
        <authorList>
            <person name="Deng W."/>
            <person name="Liou S.-R."/>
            <person name="Plunkett G. III"/>
            <person name="Mayhew G.F."/>
            <person name="Rose D.J."/>
            <person name="Burland V."/>
            <person name="Kodoyianni V."/>
            <person name="Schwartz D.C."/>
            <person name="Blattner F.R."/>
        </authorList>
    </citation>
    <scope>NUCLEOTIDE SEQUENCE [LARGE SCALE GENOMIC DNA]</scope>
    <source>
        <strain>ATCC 700931 / Ty2</strain>
    </source>
</reference>
<accession>Q8Z2A8</accession>
<accession>Q7C630</accession>
<comment type="function">
    <text evidence="1">Catalyzes the NADPH-dependent reduction of glyoxylate and hydroxypyruvate into glycolate and glycerate, respectively.</text>
</comment>
<comment type="catalytic activity">
    <reaction evidence="1">
        <text>glycolate + NADP(+) = glyoxylate + NADPH + H(+)</text>
        <dbReference type="Rhea" id="RHEA:10992"/>
        <dbReference type="ChEBI" id="CHEBI:15378"/>
        <dbReference type="ChEBI" id="CHEBI:29805"/>
        <dbReference type="ChEBI" id="CHEBI:36655"/>
        <dbReference type="ChEBI" id="CHEBI:57783"/>
        <dbReference type="ChEBI" id="CHEBI:58349"/>
        <dbReference type="EC" id="1.1.1.79"/>
    </reaction>
</comment>
<comment type="catalytic activity">
    <reaction evidence="1">
        <text>(R)-glycerate + NAD(+) = 3-hydroxypyruvate + NADH + H(+)</text>
        <dbReference type="Rhea" id="RHEA:17905"/>
        <dbReference type="ChEBI" id="CHEBI:15378"/>
        <dbReference type="ChEBI" id="CHEBI:16659"/>
        <dbReference type="ChEBI" id="CHEBI:17180"/>
        <dbReference type="ChEBI" id="CHEBI:57540"/>
        <dbReference type="ChEBI" id="CHEBI:57945"/>
        <dbReference type="EC" id="1.1.1.81"/>
    </reaction>
</comment>
<comment type="catalytic activity">
    <reaction evidence="1">
        <text>(R)-glycerate + NADP(+) = 3-hydroxypyruvate + NADPH + H(+)</text>
        <dbReference type="Rhea" id="RHEA:18657"/>
        <dbReference type="ChEBI" id="CHEBI:15378"/>
        <dbReference type="ChEBI" id="CHEBI:16659"/>
        <dbReference type="ChEBI" id="CHEBI:17180"/>
        <dbReference type="ChEBI" id="CHEBI:57783"/>
        <dbReference type="ChEBI" id="CHEBI:58349"/>
        <dbReference type="EC" id="1.1.1.81"/>
    </reaction>
</comment>
<comment type="subunit">
    <text evidence="1">Homodimer.</text>
</comment>
<comment type="subcellular location">
    <subcellularLocation>
        <location evidence="1">Cytoplasm</location>
    </subcellularLocation>
</comment>
<comment type="similarity">
    <text evidence="1">Belongs to the D-isomer specific 2-hydroxyacid dehydrogenase family. GhrB subfamily.</text>
</comment>
<dbReference type="EC" id="1.1.1.79" evidence="1"/>
<dbReference type="EC" id="1.1.1.81" evidence="1"/>
<dbReference type="EMBL" id="AE014613">
    <property type="protein sequence ID" value="AAO71351.1"/>
    <property type="molecule type" value="Genomic_DNA"/>
</dbReference>
<dbReference type="EMBL" id="AL513382">
    <property type="protein sequence ID" value="CAD07982.1"/>
    <property type="molecule type" value="Genomic_DNA"/>
</dbReference>
<dbReference type="RefSeq" id="NP_458279.1">
    <property type="nucleotide sequence ID" value="NC_003198.1"/>
</dbReference>
<dbReference type="RefSeq" id="WP_000804690.1">
    <property type="nucleotide sequence ID" value="NZ_WSUR01000001.1"/>
</dbReference>
<dbReference type="SMR" id="Q8Z2A8"/>
<dbReference type="STRING" id="220341.gene:17587994"/>
<dbReference type="KEGG" id="stt:t3873"/>
<dbReference type="KEGG" id="sty:STY4156"/>
<dbReference type="PATRIC" id="fig|220341.7.peg.4244"/>
<dbReference type="eggNOG" id="COG1052">
    <property type="taxonomic scope" value="Bacteria"/>
</dbReference>
<dbReference type="HOGENOM" id="CLU_019796_1_2_6"/>
<dbReference type="OMA" id="PHIAWAY"/>
<dbReference type="OrthoDB" id="9805416at2"/>
<dbReference type="Proteomes" id="UP000000541">
    <property type="component" value="Chromosome"/>
</dbReference>
<dbReference type="Proteomes" id="UP000002670">
    <property type="component" value="Chromosome"/>
</dbReference>
<dbReference type="GO" id="GO:0005829">
    <property type="term" value="C:cytosol"/>
    <property type="evidence" value="ECO:0007669"/>
    <property type="project" value="TreeGrafter"/>
</dbReference>
<dbReference type="GO" id="GO:0005886">
    <property type="term" value="C:plasma membrane"/>
    <property type="evidence" value="ECO:0007669"/>
    <property type="project" value="UniProtKB-UniRule"/>
</dbReference>
<dbReference type="GO" id="GO:0030267">
    <property type="term" value="F:glyoxylate reductase (NADPH) activity"/>
    <property type="evidence" value="ECO:0007669"/>
    <property type="project" value="UniProtKB-UniRule"/>
</dbReference>
<dbReference type="GO" id="GO:0008465">
    <property type="term" value="F:hydroxypyruvate reductase (NADH) activity"/>
    <property type="evidence" value="ECO:0007669"/>
    <property type="project" value="RHEA"/>
</dbReference>
<dbReference type="GO" id="GO:0120509">
    <property type="term" value="F:hydroxypyruvate reductase (NADPH) activity"/>
    <property type="evidence" value="ECO:0007669"/>
    <property type="project" value="RHEA"/>
</dbReference>
<dbReference type="GO" id="GO:0051287">
    <property type="term" value="F:NAD binding"/>
    <property type="evidence" value="ECO:0007669"/>
    <property type="project" value="InterPro"/>
</dbReference>
<dbReference type="CDD" id="cd05301">
    <property type="entry name" value="GDH"/>
    <property type="match status" value="1"/>
</dbReference>
<dbReference type="FunFam" id="3.40.50.720:FF:000026">
    <property type="entry name" value="Glyoxylate/hydroxypyruvate reductase B"/>
    <property type="match status" value="1"/>
</dbReference>
<dbReference type="Gene3D" id="3.40.50.720">
    <property type="entry name" value="NAD(P)-binding Rossmann-like Domain"/>
    <property type="match status" value="2"/>
</dbReference>
<dbReference type="HAMAP" id="MF_01667">
    <property type="entry name" value="2_Hacid_dh_C_GhrB"/>
    <property type="match status" value="1"/>
</dbReference>
<dbReference type="InterPro" id="IPR050223">
    <property type="entry name" value="D-isomer_2-hydroxyacid_DH"/>
</dbReference>
<dbReference type="InterPro" id="IPR006139">
    <property type="entry name" value="D-isomer_2_OHA_DH_cat_dom"/>
</dbReference>
<dbReference type="InterPro" id="IPR029753">
    <property type="entry name" value="D-isomer_DH_CS"/>
</dbReference>
<dbReference type="InterPro" id="IPR006140">
    <property type="entry name" value="D-isomer_DH_NAD-bd"/>
</dbReference>
<dbReference type="InterPro" id="IPR023756">
    <property type="entry name" value="Glyo/OHPyrv_Rdtase_B"/>
</dbReference>
<dbReference type="InterPro" id="IPR036291">
    <property type="entry name" value="NAD(P)-bd_dom_sf"/>
</dbReference>
<dbReference type="NCBIfam" id="NF011938">
    <property type="entry name" value="PRK15409.1"/>
    <property type="match status" value="1"/>
</dbReference>
<dbReference type="PANTHER" id="PTHR10996">
    <property type="entry name" value="2-HYDROXYACID DEHYDROGENASE-RELATED"/>
    <property type="match status" value="1"/>
</dbReference>
<dbReference type="PANTHER" id="PTHR10996:SF283">
    <property type="entry name" value="GLYOXYLATE_HYDROXYPYRUVATE REDUCTASE B"/>
    <property type="match status" value="1"/>
</dbReference>
<dbReference type="Pfam" id="PF00389">
    <property type="entry name" value="2-Hacid_dh"/>
    <property type="match status" value="1"/>
</dbReference>
<dbReference type="Pfam" id="PF02826">
    <property type="entry name" value="2-Hacid_dh_C"/>
    <property type="match status" value="1"/>
</dbReference>
<dbReference type="SUPFAM" id="SSF52283">
    <property type="entry name" value="Formate/glycerate dehydrogenase catalytic domain-like"/>
    <property type="match status" value="1"/>
</dbReference>
<dbReference type="SUPFAM" id="SSF51735">
    <property type="entry name" value="NAD(P)-binding Rossmann-fold domains"/>
    <property type="match status" value="1"/>
</dbReference>
<dbReference type="PROSITE" id="PS00670">
    <property type="entry name" value="D_2_HYDROXYACID_DH_2"/>
    <property type="match status" value="1"/>
</dbReference>
<dbReference type="PROSITE" id="PS00671">
    <property type="entry name" value="D_2_HYDROXYACID_DH_3"/>
    <property type="match status" value="1"/>
</dbReference>
<proteinExistence type="inferred from homology"/>
<evidence type="ECO:0000255" key="1">
    <source>
        <dbReference type="HAMAP-Rule" id="MF_01667"/>
    </source>
</evidence>
<feature type="chain" id="PRO_0000348396" description="Glyoxylate/hydroxypyruvate reductase B">
    <location>
        <begin position="1"/>
        <end position="324"/>
    </location>
</feature>
<feature type="active site" evidence="1">
    <location>
        <position position="237"/>
    </location>
</feature>
<feature type="active site" evidence="1">
    <location>
        <position position="266"/>
    </location>
</feature>
<feature type="active site" description="Proton donor" evidence="1">
    <location>
        <position position="285"/>
    </location>
</feature>
<gene>
    <name evidence="1" type="primary">ghrB</name>
    <name type="ordered locus">STY4156</name>
    <name type="ordered locus">t3873</name>
</gene>
<name>GHRB_SALTI</name>
<sequence length="324" mass="35313">MKPSIILYKTLPDDLLHRLEAHFTVTQVPNLHPETVARHAQAFASAQGLLGTSETVNRALLEKMPALRAASTISVGYDNVEVDALTARKIVLMHTPAVLTETVADTVMALMLATARRVVDVAERVKAGEWTESIGPAWFGVDVHHKTLGIVGMGRIGMALAQRAHFGFTMPVLYHARRRHQEAEDRFNARYCDLDTLLQEADFVCVILPLTAETRHLFGATQFARMKSSAIFINAGRGPVVDENALIAALQNGEIYAAGLDVFEQEPLSVDSPLLNMSNVVAVPHIGSATHETRYNMMACAVDNLIDALQGKIEKNCVNPQAAG</sequence>
<organism>
    <name type="scientific">Salmonella typhi</name>
    <dbReference type="NCBI Taxonomy" id="90370"/>
    <lineage>
        <taxon>Bacteria</taxon>
        <taxon>Pseudomonadati</taxon>
        <taxon>Pseudomonadota</taxon>
        <taxon>Gammaproteobacteria</taxon>
        <taxon>Enterobacterales</taxon>
        <taxon>Enterobacteriaceae</taxon>
        <taxon>Salmonella</taxon>
    </lineage>
</organism>
<keyword id="KW-0963">Cytoplasm</keyword>
<keyword id="KW-0520">NAD</keyword>
<keyword id="KW-0521">NADP</keyword>
<keyword id="KW-0560">Oxidoreductase</keyword>